<reference key="1">
    <citation type="journal article" date="1989" name="Virology">
        <title>Nucleotide sequence of the polyhedrin gene of Euxoa scandens cytoplasmic polyhedrosis virus (EsCPV).</title>
        <authorList>
            <person name="Fossiez F."/>
            <person name="Belloncik S."/>
            <person name="Arella M."/>
        </authorList>
    </citation>
    <scope>NUCLEOTIDE SEQUENCE [GENOMIC RNA]</scope>
    <scope>PROTEIN SEQUENCE OF 1-22</scope>
</reference>
<sequence>MHGLDDAQYLQQKAHNKRISEFRSSSNSGINVTVVLKYTNGVVQVYNWQGTEVIAGSLNRQLMKFPNYMNPDKHGRIEWPGEGVEHQHGLIRSNGGNGSYDIGAGDPYAMQFIVQGSVDWNATRLRFFGPDGSRWMPDDQGGASVRAGLLNAAEDIINSKMQPLYFCDRMAGKSYYVRFDDKYAPRFPTIGFEVYRYRVGATNEMGGESARTAVASLISFPTFSTAYVNEKVAVENFFQPRELVYQTAMGTPFEVRLVPMDRFVTETGI</sequence>
<dbReference type="EMBL" id="J04338">
    <property type="protein sequence ID" value="AAA42915.1"/>
    <property type="molecule type" value="Genomic_RNA"/>
</dbReference>
<dbReference type="PIR" id="A46330">
    <property type="entry name" value="A46330"/>
</dbReference>
<dbReference type="SMR" id="P36326"/>
<dbReference type="GO" id="GO:0039679">
    <property type="term" value="C:viral occlusion body"/>
    <property type="evidence" value="ECO:0007669"/>
    <property type="project" value="UniProtKB-KW"/>
</dbReference>
<organism>
    <name type="scientific">Euxoa scandens cypovirus</name>
    <name type="common">EsCPV</name>
    <name type="synonym">Euxoa scandens cytoplasmic polyhedrosis virus</name>
    <dbReference type="NCBI Taxonomy" id="10983"/>
    <lineage>
        <taxon>Viruses</taxon>
        <taxon>Riboviria</taxon>
        <taxon>Orthornavirae</taxon>
        <taxon>Duplornaviricota</taxon>
        <taxon>Resentoviricetes</taxon>
        <taxon>Reovirales</taxon>
        <taxon>Spinareoviridae</taxon>
        <taxon>Cypovirus</taxon>
        <taxon>Cypovirus 5</taxon>
    </lineage>
</organism>
<proteinExistence type="evidence at protein level"/>
<feature type="chain" id="PRO_0000222809" description="Polyhedrin">
    <location>
        <begin position="1"/>
        <end position="269"/>
    </location>
</feature>
<protein>
    <recommendedName>
        <fullName>Polyhedrin</fullName>
    </recommendedName>
    <alternativeName>
        <fullName>C-polyhedrin</fullName>
    </alternativeName>
</protein>
<comment type="function">
    <text>Major component of the virus occlusion bodies, which are large proteinaceous structures (polyhedra), that protect the virus from the outside environment for extended periods until they are ingested by insect larvae.</text>
</comment>
<name>PYHD_CPVES</name>
<organismHost>
    <name type="scientific">Euxoa</name>
    <dbReference type="NCBI Taxonomy" id="214144"/>
</organismHost>
<accession>P36326</accession>
<keyword id="KW-0903">Direct protein sequencing</keyword>
<keyword id="KW-0842">Viral occlusion body</keyword>